<proteinExistence type="evidence at transcript level"/>
<sequence length="57" mass="5793">MLFKSLQSITSVNSIQKNQISSVSVGSSQSNNNAALLDAAALVVIPGLLTVAAVAHI</sequence>
<dbReference type="EMBL" id="AAFI02000055">
    <property type="protein sequence ID" value="EAL65736.1"/>
    <property type="molecule type" value="Genomic_DNA"/>
</dbReference>
<dbReference type="RefSeq" id="XP_639055.1">
    <property type="nucleotide sequence ID" value="XM_633963.1"/>
</dbReference>
<dbReference type="FunCoup" id="Q54R36">
    <property type="interactions" value="640"/>
</dbReference>
<dbReference type="STRING" id="44689.Q54R36"/>
<dbReference type="PaxDb" id="44689-DDB0229989"/>
<dbReference type="EnsemblProtists" id="EAL65736">
    <property type="protein sequence ID" value="EAL65736"/>
    <property type="gene ID" value="DDB_G0283503"/>
</dbReference>
<dbReference type="GeneID" id="8624080"/>
<dbReference type="KEGG" id="ddi:DDB_G0283503"/>
<dbReference type="dictyBase" id="DDB_G0283503"/>
<dbReference type="HOGENOM" id="CLU_210588_0_0_1"/>
<dbReference type="InParanoid" id="Q54R36"/>
<dbReference type="PhylomeDB" id="Q54R36"/>
<dbReference type="PRO" id="PR:Q54R36"/>
<dbReference type="Proteomes" id="UP000002195">
    <property type="component" value="Chromosome 4"/>
</dbReference>
<dbReference type="GO" id="GO:0016020">
    <property type="term" value="C:membrane"/>
    <property type="evidence" value="ECO:0007669"/>
    <property type="project" value="UniProtKB-SubCell"/>
</dbReference>
<evidence type="ECO:0000255" key="1"/>
<evidence type="ECO:0000269" key="2">
    <source>
    </source>
</evidence>
<evidence type="ECO:0000269" key="3">
    <source>
    </source>
</evidence>
<evidence type="ECO:0000269" key="4">
    <source>
    </source>
</evidence>
<evidence type="ECO:0000305" key="5"/>
<feature type="chain" id="PRO_0000392660" description="Uncharacterized protein DDB_G0283503">
    <location>
        <begin position="1"/>
        <end position="57"/>
    </location>
</feature>
<feature type="transmembrane region" description="Helical" evidence="1">
    <location>
        <begin position="34"/>
        <end position="54"/>
    </location>
</feature>
<comment type="subcellular location">
    <subcellularLocation>
        <location evidence="5">Membrane</location>
        <topology evidence="5">Single-pass membrane protein</topology>
    </subcellularLocation>
</comment>
<comment type="developmental stage">
    <text evidence="2 3 4">Expressed in prestalk pstA and pstO cells in the slug stage. Preferentially restricted to pstO cells during culmination. Expression in the prestalk cells is reduced in dmtA-null cells.</text>
</comment>
<accession>Q54R36</accession>
<organism>
    <name type="scientific">Dictyostelium discoideum</name>
    <name type="common">Social amoeba</name>
    <dbReference type="NCBI Taxonomy" id="44689"/>
    <lineage>
        <taxon>Eukaryota</taxon>
        <taxon>Amoebozoa</taxon>
        <taxon>Evosea</taxon>
        <taxon>Eumycetozoa</taxon>
        <taxon>Dictyostelia</taxon>
        <taxon>Dictyosteliales</taxon>
        <taxon>Dictyosteliaceae</taxon>
        <taxon>Dictyostelium</taxon>
    </lineage>
</organism>
<keyword id="KW-0472">Membrane</keyword>
<keyword id="KW-1185">Reference proteome</keyword>
<keyword id="KW-0812">Transmembrane</keyword>
<keyword id="KW-1133">Transmembrane helix</keyword>
<name>Y3503_DICDI</name>
<protein>
    <recommendedName>
        <fullName>Uncharacterized protein DDB_G0283503</fullName>
    </recommendedName>
</protein>
<gene>
    <name type="ORF">DDB_G0283503</name>
</gene>
<reference key="1">
    <citation type="journal article" date="2005" name="Nature">
        <title>The genome of the social amoeba Dictyostelium discoideum.</title>
        <authorList>
            <person name="Eichinger L."/>
            <person name="Pachebat J.A."/>
            <person name="Gloeckner G."/>
            <person name="Rajandream M.A."/>
            <person name="Sucgang R."/>
            <person name="Berriman M."/>
            <person name="Song J."/>
            <person name="Olsen R."/>
            <person name="Szafranski K."/>
            <person name="Xu Q."/>
            <person name="Tunggal B."/>
            <person name="Kummerfeld S."/>
            <person name="Madera M."/>
            <person name="Konfortov B.A."/>
            <person name="Rivero F."/>
            <person name="Bankier A.T."/>
            <person name="Lehmann R."/>
            <person name="Hamlin N."/>
            <person name="Davies R."/>
            <person name="Gaudet P."/>
            <person name="Fey P."/>
            <person name="Pilcher K."/>
            <person name="Chen G."/>
            <person name="Saunders D."/>
            <person name="Sodergren E.J."/>
            <person name="Davis P."/>
            <person name="Kerhornou A."/>
            <person name="Nie X."/>
            <person name="Hall N."/>
            <person name="Anjard C."/>
            <person name="Hemphill L."/>
            <person name="Bason N."/>
            <person name="Farbrother P."/>
            <person name="Desany B."/>
            <person name="Just E."/>
            <person name="Morio T."/>
            <person name="Rost R."/>
            <person name="Churcher C.M."/>
            <person name="Cooper J."/>
            <person name="Haydock S."/>
            <person name="van Driessche N."/>
            <person name="Cronin A."/>
            <person name="Goodhead I."/>
            <person name="Muzny D.M."/>
            <person name="Mourier T."/>
            <person name="Pain A."/>
            <person name="Lu M."/>
            <person name="Harper D."/>
            <person name="Lindsay R."/>
            <person name="Hauser H."/>
            <person name="James K.D."/>
            <person name="Quiles M."/>
            <person name="Madan Babu M."/>
            <person name="Saito T."/>
            <person name="Buchrieser C."/>
            <person name="Wardroper A."/>
            <person name="Felder M."/>
            <person name="Thangavelu M."/>
            <person name="Johnson D."/>
            <person name="Knights A."/>
            <person name="Loulseged H."/>
            <person name="Mungall K.L."/>
            <person name="Oliver K."/>
            <person name="Price C."/>
            <person name="Quail M.A."/>
            <person name="Urushihara H."/>
            <person name="Hernandez J."/>
            <person name="Rabbinowitsch E."/>
            <person name="Steffen D."/>
            <person name="Sanders M."/>
            <person name="Ma J."/>
            <person name="Kohara Y."/>
            <person name="Sharp S."/>
            <person name="Simmonds M.N."/>
            <person name="Spiegler S."/>
            <person name="Tivey A."/>
            <person name="Sugano S."/>
            <person name="White B."/>
            <person name="Walker D."/>
            <person name="Woodward J.R."/>
            <person name="Winckler T."/>
            <person name="Tanaka Y."/>
            <person name="Shaulsky G."/>
            <person name="Schleicher M."/>
            <person name="Weinstock G.M."/>
            <person name="Rosenthal A."/>
            <person name="Cox E.C."/>
            <person name="Chisholm R.L."/>
            <person name="Gibbs R.A."/>
            <person name="Loomis W.F."/>
            <person name="Platzer M."/>
            <person name="Kay R.R."/>
            <person name="Williams J.G."/>
            <person name="Dear P.H."/>
            <person name="Noegel A.A."/>
            <person name="Barrell B.G."/>
            <person name="Kuspa A."/>
        </authorList>
    </citation>
    <scope>NUCLEOTIDE SEQUENCE [LARGE SCALE GENOMIC DNA]</scope>
    <source>
        <strain>AX4</strain>
    </source>
</reference>
<reference key="2">
    <citation type="journal article" date="2003" name="Eukaryot. Cell">
        <title>Changing patterns of gene expression in Dictyostelium prestalk cell subtypes recognized by in situ hybridization with genes from microarray analyses.</title>
        <authorList>
            <person name="Maeda M."/>
            <person name="Sakamoto H."/>
            <person name="Iranfar N."/>
            <person name="Fuller D."/>
            <person name="Maruo T."/>
            <person name="Ogihara S."/>
            <person name="Morio T."/>
            <person name="Urushihara H."/>
            <person name="Tanaka Y."/>
            <person name="Loomis W.F."/>
        </authorList>
    </citation>
    <scope>DEVELOPMENTAL STAGE [LARGE SCALE ANALYSIS]</scope>
</reference>
<reference key="3">
    <citation type="journal article" date="2004" name="Eukaryot. Cell">
        <title>Control of cell type proportioning in Dictyostelium discoideum by differentiation-inducing factor as determined by in situ hybridization.</title>
        <authorList>
            <person name="Maruo T."/>
            <person name="Sakamoto H."/>
            <person name="Iranfar N."/>
            <person name="Fuller D."/>
            <person name="Morio T."/>
            <person name="Urushihara H."/>
            <person name="Tanaka Y."/>
            <person name="Maeda M."/>
            <person name="Loomis W.F."/>
        </authorList>
    </citation>
    <scope>DEVELOPMENTAL STAGE [LARGE SCALE ANALYSIS]</scope>
</reference>
<reference key="4">
    <citation type="journal article" date="2004" name="Int. J. Dev. Biol.">
        <title>Identification of new modes of Dd-STATa regulation of gene expression in Dictyostelium by in situ hybridisation.</title>
        <authorList>
            <person name="Shimada N."/>
            <person name="Maeda M."/>
            <person name="Urushihara H."/>
            <person name="Kawata T."/>
        </authorList>
    </citation>
    <scope>IDENTIFICATION</scope>
</reference>
<reference key="5">
    <citation type="journal article" date="2005" name="Gene Expr. Patterns">
        <title>Novel patterns of the gene expression regulation in the prestalk region along the antero-posterior axis during multicellular development of Dictyostelium.</title>
        <authorList>
            <person name="Yamada Y."/>
            <person name="Sakamoto H."/>
            <person name="Ogihara S."/>
            <person name="Maeda M."/>
        </authorList>
    </citation>
    <scope>DEVELOPMENTAL STAGE [LARGE SCALE ANALYSIS]</scope>
</reference>